<evidence type="ECO:0000255" key="1">
    <source>
        <dbReference type="HAMAP-Rule" id="MF_00983"/>
    </source>
</evidence>
<evidence type="ECO:0000269" key="2">
    <source>
    </source>
</evidence>
<evidence type="ECO:0000269" key="3">
    <source>
    </source>
</evidence>
<evidence type="ECO:0000269" key="4">
    <source>
    </source>
</evidence>
<evidence type="ECO:0000269" key="5">
    <source>
    </source>
</evidence>
<evidence type="ECO:0000303" key="6">
    <source>
    </source>
</evidence>
<evidence type="ECO:0000305" key="7">
    <source>
    </source>
</evidence>
<evidence type="ECO:0000305" key="8">
    <source>
    </source>
</evidence>
<evidence type="ECO:0000312" key="9">
    <source>
        <dbReference type="EMBL" id="AAW90079.1"/>
    </source>
</evidence>
<name>PRIA_NEIG1</name>
<accession>Q5F6V8</accession>
<sequence length="729" mass="81124">MIYHRIAVNVPLSDGLLTYSHSEPLPPGTRVLVPFRNKTVVGMVWETDIAPDMDAARILSVQTVFVEEKPLSQSWRDLLAFTSRYYHYPTGQAVFAALPQGLKETRAVEMPQPPLFYALNEAGRAQTPPPARFNKKAALWDALLSGEMTMAALKQANAQAAKLIEDWAEQGWIETTEAAKPVLRPYRGQASHSEFVLNTGQQKASDEIQTALGRFRSFLLYGITGSGKTEVYFDAMAKVLAQGRQVLFLLPEINLTPQLLKRVENRFADVPTAVLHSRMAAGRRTQDYLRAMLGQAKLVIGTRLAVFTPLPDVGLIVVDEEHDGSFKQDNELRYHARDLAVWRAKQGGCPVVLGSATPSLESWHKAQSGAYRLLQLTERAHASAQLPQVDILNIGRLKLDNGFSPQALQLLKQNFEAGGMSLVYLNRRGFAPALFCGDCGHTFGCPNCSAKMVLHQRARQLRCHHCDHREPIPFKCPDCGNQDLTAVGHGTQRVEETLRAFLPKAAVVRVDRDSTAHKNDWADLYRRIANDEIDILVGTQMLAKGHDFARLNLVIVLNADGSLYSADFRAPERLFAELMQVSGRAGRADKPGKVLIQTQLPEHPVFAAVKAQDYAVFAENELNERQMFAMPPFGFQTAVRADAPRVADAMEFLNAAKETLAPLLPESVSRFGAAPMLMVRLAERERAQVFLESTSRQDLHRAVSLWVQVLQQNRDGKIRWSVDVDPQEA</sequence>
<proteinExistence type="evidence at protein level"/>
<protein>
    <recommendedName>
        <fullName evidence="1">Replication restart protein PriA</fullName>
    </recommendedName>
    <alternativeName>
        <fullName evidence="1">ATP-dependent DNA helicase PriA</fullName>
        <ecNumber evidence="1 7 8">5.6.2.4</ecNumber>
    </alternativeName>
    <alternativeName>
        <fullName evidence="1">DNA 3'-5' helicase PriA</fullName>
    </alternativeName>
    <alternativeName>
        <fullName evidence="6">Helicase PriA</fullName>
    </alternativeName>
</protein>
<comment type="function">
    <text evidence="1">Initiates the restart of stalled replication forks, which reloads the replicative helicase on sites other than the origin of replication. Recognizes and binds to abandoned replication forks and remodels them to uncover a helicase loading site. Promotes assembly of the primosome at these replication forks.</text>
</comment>
<comment type="function">
    <text evidence="2 4">DNA helicase with greatest unwinding activity on forked DNA substrates with relatively short duplex lagging strand arms (PubMed:21861872). A DNA-dependent ATPase (PubMed:21861872). Required for DNA transformation and DNA repair (PubMed:16030229). Binds single-stranded (ss)DNA and replication fork-like DNA but not double-stranded (ds)DNA (PubMed:21861872).</text>
</comment>
<comment type="catalytic activity">
    <reaction evidence="1 7 8">
        <text>Couples ATP hydrolysis with the unwinding of duplex DNA by translocating in the 3'-5' direction.</text>
        <dbReference type="EC" id="5.6.2.4"/>
    </reaction>
</comment>
<comment type="catalytic activity">
    <reaction evidence="1 4 5">
        <text>ATP + H2O = ADP + phosphate + H(+)</text>
        <dbReference type="Rhea" id="RHEA:13065"/>
        <dbReference type="ChEBI" id="CHEBI:15377"/>
        <dbReference type="ChEBI" id="CHEBI:15378"/>
        <dbReference type="ChEBI" id="CHEBI:30616"/>
        <dbReference type="ChEBI" id="CHEBI:43474"/>
        <dbReference type="ChEBI" id="CHEBI:456216"/>
        <dbReference type="EC" id="5.6.2.4"/>
    </reaction>
</comment>
<comment type="cofactor">
    <cofactor evidence="1">
        <name>Zn(2+)</name>
        <dbReference type="ChEBI" id="CHEBI:29105"/>
    </cofactor>
    <text evidence="1">Binds 2 zinc ions per subunit.</text>
</comment>
<comment type="activity regulation">
    <text evidence="4 5">Helicase and ATPase activities on forked DNA are stimulated by PriB; E.coli PriB does not stimulate this helicase (PubMed:21861872, PubMed:23193948). PriA:PriB complex-catalyzed duplex DNA winding is inhibited by CGS 15943 (CHEBI:131351) (PubMed:23193948). CGS 15943 decreases ATP hydrolysis and decreases PriA's affinity for DNA (PubMed:23193948).</text>
</comment>
<comment type="biophysicochemical properties">
    <kinetics>
        <KM evidence="4">54 uM for ATP in presence of forked DNA with 40 bp lagging strand arm</KM>
        <KM evidence="4">2 nM for forked DNA with 40 bp lagging strand arm</KM>
        <text evidence="4">kcat is 9 sec(-1) for ATPase, in the presence of 100 nM monomeric PriB kcat is 14 sec(-1) for ATPase.</text>
    </kinetics>
</comment>
<comment type="subunit">
    <text evidence="1 3">Interacts with PriB with high affinity in the absence of DNA (PubMed:19906704). Component of the replication restart primosome.</text>
</comment>
<comment type="disruption phenotype">
    <text evidence="2">Growth deficient on solid media due to a reduced growth rate, 10,000-reduced DNA transformation efficiency, 10-fold increased sensitivity to UV light and oxidative stress, greater than 10,000-fold reduction in ability to survive nalidixic acid (generates DNA double-strand breaks). Does not play a role in homologous recombination-mediated pilin antigenic variation.</text>
</comment>
<comment type="similarity">
    <text evidence="1">Belongs to the helicase family. PriA subfamily.</text>
</comment>
<organism>
    <name type="scientific">Neisseria gonorrhoeae (strain ATCC 700825 / FA 1090)</name>
    <dbReference type="NCBI Taxonomy" id="242231"/>
    <lineage>
        <taxon>Bacteria</taxon>
        <taxon>Pseudomonadati</taxon>
        <taxon>Pseudomonadota</taxon>
        <taxon>Betaproteobacteria</taxon>
        <taxon>Neisseriales</taxon>
        <taxon>Neisseriaceae</taxon>
        <taxon>Neisseria</taxon>
    </lineage>
</organism>
<reference evidence="9" key="1">
    <citation type="submission" date="2003-03" db="EMBL/GenBank/DDBJ databases">
        <title>The complete genome sequence of Neisseria gonorrhoeae.</title>
        <authorList>
            <person name="Lewis L.A."/>
            <person name="Gillaspy A.F."/>
            <person name="McLaughlin R.E."/>
            <person name="Gipson M."/>
            <person name="Ducey T.F."/>
            <person name="Ownbey T."/>
            <person name="Hartman K."/>
            <person name="Nydick C."/>
            <person name="Carson M.B."/>
            <person name="Vaughn J."/>
            <person name="Thomson C."/>
            <person name="Song L."/>
            <person name="Lin S."/>
            <person name="Yuan X."/>
            <person name="Najar F."/>
            <person name="Zhan M."/>
            <person name="Ren Q."/>
            <person name="Zhu H."/>
            <person name="Qi S."/>
            <person name="Kenton S.M."/>
            <person name="Lai H."/>
            <person name="White J.D."/>
            <person name="Clifton S."/>
            <person name="Roe B.A."/>
            <person name="Dyer D.W."/>
        </authorList>
    </citation>
    <scope>NUCLEOTIDE SEQUENCE [LARGE SCALE GENOMIC DNA]</scope>
    <source>
        <strain>ATCC 700825 / FA 1090</strain>
    </source>
</reference>
<reference key="2">
    <citation type="journal article" date="2005" name="J. Bacteriol.">
        <title>Mutation of the priA gene of Neisseria gonorrhoeae affects DNA transformation and DNA repair.</title>
        <authorList>
            <person name="Kline K.A."/>
            <person name="Seifert H.S."/>
        </authorList>
    </citation>
    <scope>FUNCTION</scope>
    <scope>DISRUPTION PHENOTYPE</scope>
    <source>
        <strain>ATCC 700825 / FA 1090</strain>
    </source>
</reference>
<reference key="3">
    <citation type="journal article" date="2010" name="Nucleic Acids Res.">
        <title>The crystal structure of Neisseria gonorrhoeae PriB reveals mechanistic differences among bacterial DNA replication restart pathways.</title>
        <authorList>
            <person name="Dong J."/>
            <person name="George N.P."/>
            <person name="Duckett K.L."/>
            <person name="DeBeer M.A."/>
            <person name="Lopper M.E."/>
        </authorList>
    </citation>
    <scope>INTERACTION WITH PRIB</scope>
    <scope>SUBUNIT</scope>
    <source>
        <strain>ATCC 700825 / FA 1090</strain>
    </source>
</reference>
<reference key="4">
    <citation type="journal article" date="2011" name="BMC Microbiol.">
        <title>A bacterial PriB with weak single-stranded DNA binding activity can stimulate the DNA unwinding activity of its cognate PriA helicase.</title>
        <authorList>
            <person name="Feng C."/>
            <person name="Sunchu B."/>
            <person name="Greenwood M.E."/>
            <person name="Lopper M.E."/>
        </authorList>
    </citation>
    <scope>FUNCTION AS A HELICASE</scope>
    <scope>FUNCTION AS AN ATPASE</scope>
    <scope>CATALYTIC ACTIVITY</scope>
    <scope>ACTIVITY REGULATION</scope>
    <scope>BIOPHYSICOCHEMICAL PROPERTIES</scope>
    <scope>DNA-BINDING</scope>
    <source>
        <strain>ATCC 700825 / FA 1090</strain>
    </source>
</reference>
<reference key="5">
    <citation type="journal article" date="2012" name="Biochemistry">
        <title>Identification of a small molecule PriA helicase inhibitor.</title>
        <authorList>
            <person name="Sunchu B."/>
            <person name="Berg L."/>
            <person name="Ward H.E."/>
            <person name="Lopper M.E."/>
        </authorList>
    </citation>
    <scope>FUNCTION</scope>
    <scope>CATALYTIC ACTIVITY</scope>
    <scope>ACTIVITY REGULATION</scope>
    <source>
        <strain>ATCC 700825 / FA 1090</strain>
    </source>
</reference>
<keyword id="KW-0067">ATP-binding</keyword>
<keyword id="KW-0235">DNA replication</keyword>
<keyword id="KW-0238">DNA-binding</keyword>
<keyword id="KW-0347">Helicase</keyword>
<keyword id="KW-0378">Hydrolase</keyword>
<keyword id="KW-0413">Isomerase</keyword>
<keyword id="KW-0479">Metal-binding</keyword>
<keyword id="KW-0547">Nucleotide-binding</keyword>
<keyword id="KW-0639">Primosome</keyword>
<keyword id="KW-1185">Reference proteome</keyword>
<keyword id="KW-0862">Zinc</keyword>
<dbReference type="EC" id="5.6.2.4" evidence="1 7 8"/>
<dbReference type="EMBL" id="AE004969">
    <property type="protein sequence ID" value="AAW90079.1"/>
    <property type="molecule type" value="Genomic_DNA"/>
</dbReference>
<dbReference type="RefSeq" id="WP_010951264.1">
    <property type="nucleotide sequence ID" value="NC_002946.2"/>
</dbReference>
<dbReference type="RefSeq" id="YP_208491.1">
    <property type="nucleotide sequence ID" value="NC_002946.2"/>
</dbReference>
<dbReference type="SMR" id="Q5F6V8"/>
<dbReference type="STRING" id="242231.NGO_1437"/>
<dbReference type="KEGG" id="ngo:NGO_1437"/>
<dbReference type="PATRIC" id="fig|242231.10.peg.1695"/>
<dbReference type="HOGENOM" id="CLU_013353_4_0_4"/>
<dbReference type="Proteomes" id="UP000000535">
    <property type="component" value="Chromosome"/>
</dbReference>
<dbReference type="GO" id="GO:1990077">
    <property type="term" value="C:primosome complex"/>
    <property type="evidence" value="ECO:0007669"/>
    <property type="project" value="UniProtKB-UniRule"/>
</dbReference>
<dbReference type="GO" id="GO:0043138">
    <property type="term" value="F:3'-5' DNA helicase activity"/>
    <property type="evidence" value="ECO:0007669"/>
    <property type="project" value="TreeGrafter"/>
</dbReference>
<dbReference type="GO" id="GO:0005524">
    <property type="term" value="F:ATP binding"/>
    <property type="evidence" value="ECO:0007669"/>
    <property type="project" value="UniProtKB-UniRule"/>
</dbReference>
<dbReference type="GO" id="GO:0016887">
    <property type="term" value="F:ATP hydrolysis activity"/>
    <property type="evidence" value="ECO:0007669"/>
    <property type="project" value="RHEA"/>
</dbReference>
<dbReference type="GO" id="GO:0003677">
    <property type="term" value="F:DNA binding"/>
    <property type="evidence" value="ECO:0007669"/>
    <property type="project" value="UniProtKB-UniRule"/>
</dbReference>
<dbReference type="GO" id="GO:0008270">
    <property type="term" value="F:zinc ion binding"/>
    <property type="evidence" value="ECO:0007669"/>
    <property type="project" value="UniProtKB-UniRule"/>
</dbReference>
<dbReference type="GO" id="GO:0006310">
    <property type="term" value="P:DNA recombination"/>
    <property type="evidence" value="ECO:0007669"/>
    <property type="project" value="InterPro"/>
</dbReference>
<dbReference type="GO" id="GO:0006270">
    <property type="term" value="P:DNA replication initiation"/>
    <property type="evidence" value="ECO:0007669"/>
    <property type="project" value="TreeGrafter"/>
</dbReference>
<dbReference type="GO" id="GO:0006269">
    <property type="term" value="P:DNA replication, synthesis of primer"/>
    <property type="evidence" value="ECO:0007669"/>
    <property type="project" value="UniProtKB-KW"/>
</dbReference>
<dbReference type="GO" id="GO:0006302">
    <property type="term" value="P:double-strand break repair"/>
    <property type="evidence" value="ECO:0007669"/>
    <property type="project" value="InterPro"/>
</dbReference>
<dbReference type="CDD" id="cd17929">
    <property type="entry name" value="DEXHc_priA"/>
    <property type="match status" value="1"/>
</dbReference>
<dbReference type="CDD" id="cd18804">
    <property type="entry name" value="SF2_C_priA"/>
    <property type="match status" value="1"/>
</dbReference>
<dbReference type="FunFam" id="3.40.50.300:FF:000489">
    <property type="entry name" value="Primosome assembly protein PriA"/>
    <property type="match status" value="1"/>
</dbReference>
<dbReference type="Gene3D" id="3.40.50.300">
    <property type="entry name" value="P-loop containing nucleotide triphosphate hydrolases"/>
    <property type="match status" value="2"/>
</dbReference>
<dbReference type="Gene3D" id="3.40.1440.60">
    <property type="entry name" value="PriA, 3(prime) DNA-binding domain"/>
    <property type="match status" value="1"/>
</dbReference>
<dbReference type="HAMAP" id="MF_00983">
    <property type="entry name" value="PriA"/>
    <property type="match status" value="1"/>
</dbReference>
<dbReference type="InterPro" id="IPR011545">
    <property type="entry name" value="DEAD/DEAH_box_helicase_dom"/>
</dbReference>
<dbReference type="InterPro" id="IPR014001">
    <property type="entry name" value="Helicase_ATP-bd"/>
</dbReference>
<dbReference type="InterPro" id="IPR001650">
    <property type="entry name" value="Helicase_C-like"/>
</dbReference>
<dbReference type="InterPro" id="IPR027417">
    <property type="entry name" value="P-loop_NTPase"/>
</dbReference>
<dbReference type="InterPro" id="IPR005259">
    <property type="entry name" value="PriA"/>
</dbReference>
<dbReference type="InterPro" id="IPR041222">
    <property type="entry name" value="PriA_3primeBD"/>
</dbReference>
<dbReference type="InterPro" id="IPR042115">
    <property type="entry name" value="PriA_3primeBD_sf"/>
</dbReference>
<dbReference type="InterPro" id="IPR041236">
    <property type="entry name" value="PriA_C"/>
</dbReference>
<dbReference type="InterPro" id="IPR040498">
    <property type="entry name" value="PriA_CRR"/>
</dbReference>
<dbReference type="InterPro" id="IPR050880">
    <property type="entry name" value="PriA_helicase"/>
</dbReference>
<dbReference type="NCBIfam" id="TIGR00595">
    <property type="entry name" value="priA"/>
    <property type="match status" value="1"/>
</dbReference>
<dbReference type="NCBIfam" id="NF004067">
    <property type="entry name" value="PRK05580.1-4"/>
    <property type="match status" value="1"/>
</dbReference>
<dbReference type="PANTHER" id="PTHR30580">
    <property type="entry name" value="PRIMOSOMAL PROTEIN N"/>
    <property type="match status" value="1"/>
</dbReference>
<dbReference type="PANTHER" id="PTHR30580:SF0">
    <property type="entry name" value="PRIMOSOMAL PROTEIN N"/>
    <property type="match status" value="1"/>
</dbReference>
<dbReference type="Pfam" id="PF00270">
    <property type="entry name" value="DEAD"/>
    <property type="match status" value="1"/>
</dbReference>
<dbReference type="Pfam" id="PF00271">
    <property type="entry name" value="Helicase_C"/>
    <property type="match status" value="1"/>
</dbReference>
<dbReference type="Pfam" id="PF17764">
    <property type="entry name" value="PriA_3primeBD"/>
    <property type="match status" value="1"/>
</dbReference>
<dbReference type="Pfam" id="PF18074">
    <property type="entry name" value="PriA_C"/>
    <property type="match status" value="1"/>
</dbReference>
<dbReference type="Pfam" id="PF18319">
    <property type="entry name" value="Zn_ribbon_PriA"/>
    <property type="match status" value="1"/>
</dbReference>
<dbReference type="SMART" id="SM00487">
    <property type="entry name" value="DEXDc"/>
    <property type="match status" value="1"/>
</dbReference>
<dbReference type="SMART" id="SM00490">
    <property type="entry name" value="HELICc"/>
    <property type="match status" value="1"/>
</dbReference>
<dbReference type="SUPFAM" id="SSF52540">
    <property type="entry name" value="P-loop containing nucleoside triphosphate hydrolases"/>
    <property type="match status" value="2"/>
</dbReference>
<dbReference type="PROSITE" id="PS51192">
    <property type="entry name" value="HELICASE_ATP_BIND_1"/>
    <property type="match status" value="1"/>
</dbReference>
<dbReference type="PROSITE" id="PS51194">
    <property type="entry name" value="HELICASE_CTER"/>
    <property type="match status" value="1"/>
</dbReference>
<feature type="chain" id="PRO_0000462143" description="Replication restart protein PriA">
    <location>
        <begin position="1"/>
        <end position="729"/>
    </location>
</feature>
<feature type="domain" description="Helicase ATP-binding" evidence="1">
    <location>
        <begin position="209"/>
        <end position="376"/>
    </location>
</feature>
<feature type="domain" description="Helicase C-terminal" evidence="1">
    <location>
        <begin position="471"/>
        <end position="623"/>
    </location>
</feature>
<feature type="short sequence motif" description="DEAH box" evidence="1">
    <location>
        <begin position="319"/>
        <end position="322"/>
    </location>
</feature>
<feature type="binding site" evidence="1">
    <location>
        <begin position="222"/>
        <end position="229"/>
    </location>
    <ligand>
        <name>ATP</name>
        <dbReference type="ChEBI" id="CHEBI:30616"/>
    </ligand>
</feature>
<feature type="binding site" evidence="1">
    <location>
        <position position="436"/>
    </location>
    <ligand>
        <name>Zn(2+)</name>
        <dbReference type="ChEBI" id="CHEBI:29105"/>
        <label>1</label>
    </ligand>
</feature>
<feature type="binding site" evidence="1">
    <location>
        <position position="439"/>
    </location>
    <ligand>
        <name>Zn(2+)</name>
        <dbReference type="ChEBI" id="CHEBI:29105"/>
        <label>1</label>
    </ligand>
</feature>
<feature type="binding site" evidence="1">
    <location>
        <position position="445"/>
    </location>
    <ligand>
        <name>Zn(2+)</name>
        <dbReference type="ChEBI" id="CHEBI:29105"/>
        <label>2</label>
    </ligand>
</feature>
<feature type="binding site" evidence="1">
    <location>
        <position position="448"/>
    </location>
    <ligand>
        <name>Zn(2+)</name>
        <dbReference type="ChEBI" id="CHEBI:29105"/>
        <label>2</label>
    </ligand>
</feature>
<feature type="binding site" evidence="1">
    <location>
        <position position="463"/>
    </location>
    <ligand>
        <name>Zn(2+)</name>
        <dbReference type="ChEBI" id="CHEBI:29105"/>
        <label>2</label>
    </ligand>
</feature>
<feature type="binding site" evidence="1">
    <location>
        <position position="466"/>
    </location>
    <ligand>
        <name>Zn(2+)</name>
        <dbReference type="ChEBI" id="CHEBI:29105"/>
        <label>2</label>
    </ligand>
</feature>
<feature type="binding site" evidence="1">
    <location>
        <position position="476"/>
    </location>
    <ligand>
        <name>Zn(2+)</name>
        <dbReference type="ChEBI" id="CHEBI:29105"/>
        <label>1</label>
    </ligand>
</feature>
<feature type="binding site" evidence="1">
    <location>
        <position position="479"/>
    </location>
    <ligand>
        <name>Zn(2+)</name>
        <dbReference type="ChEBI" id="CHEBI:29105"/>
        <label>1</label>
    </ligand>
</feature>
<gene>
    <name evidence="1" type="primary">priA</name>
    <name evidence="9" type="ordered locus">NGO_1437</name>
</gene>